<gene>
    <name type="primary">degQ</name>
    <name type="synonym">sacQ</name>
    <name type="ordered locus">BLi03360</name>
    <name type="ordered locus">BL02609</name>
</gene>
<evidence type="ECO:0000250" key="1"/>
<evidence type="ECO:0000305" key="2"/>
<dbReference type="EMBL" id="AF459919">
    <property type="protein sequence ID" value="AAL67538.1"/>
    <property type="molecule type" value="Genomic_DNA"/>
</dbReference>
<dbReference type="EMBL" id="AE017333">
    <property type="protein sequence ID" value="AAU42191.1"/>
    <property type="molecule type" value="Genomic_DNA"/>
</dbReference>
<dbReference type="EMBL" id="CP000002">
    <property type="protein sequence ID" value="AAU24823.1"/>
    <property type="molecule type" value="Genomic_DNA"/>
</dbReference>
<dbReference type="RefSeq" id="WP_003184860.1">
    <property type="nucleotide sequence ID" value="NC_006322.1"/>
</dbReference>
<dbReference type="SMR" id="P69889"/>
<dbReference type="STRING" id="279010.BL02609"/>
<dbReference type="GeneID" id="92860059"/>
<dbReference type="KEGG" id="bld:BLi03360"/>
<dbReference type="KEGG" id="bli:BL02609"/>
<dbReference type="eggNOG" id="ENOG5032B28">
    <property type="taxonomic scope" value="Bacteria"/>
</dbReference>
<dbReference type="HOGENOM" id="CLU_3132404_0_0_9"/>
<dbReference type="Proteomes" id="UP000000606">
    <property type="component" value="Chromosome"/>
</dbReference>
<dbReference type="GO" id="GO:1900192">
    <property type="term" value="P:positive regulation of single-species biofilm formation"/>
    <property type="evidence" value="ECO:0007669"/>
    <property type="project" value="InterPro"/>
</dbReference>
<dbReference type="InterPro" id="IPR012554">
    <property type="entry name" value="DegQ"/>
</dbReference>
<dbReference type="NCBIfam" id="NF041457">
    <property type="entry name" value="reg_protDegQ_Bacil"/>
    <property type="match status" value="1"/>
</dbReference>
<dbReference type="Pfam" id="PF08181">
    <property type="entry name" value="DegQ"/>
    <property type="match status" value="1"/>
</dbReference>
<reference key="1">
    <citation type="journal article" date="2002" name="FEMS Microbiol. Lett.">
        <title>Co-linear scaffold of the Bacillus licheniformis and Bacillus subtilis genomes and its use to compare their competence genes.</title>
        <authorList>
            <person name="Lapidus A."/>
            <person name="Galleron N."/>
            <person name="Andersen J.T."/>
            <person name="Joergensen P.L."/>
            <person name="Ehrlich S.D."/>
            <person name="Sorokin A."/>
        </authorList>
    </citation>
    <scope>NUCLEOTIDE SEQUENCE [GENOMIC DNA]</scope>
</reference>
<reference key="2">
    <citation type="journal article" date="2004" name="J. Mol. Microbiol. Biotechnol.">
        <title>The complete genome sequence of Bacillus licheniformis DSM13, an organism with great industrial potential.</title>
        <authorList>
            <person name="Veith B."/>
            <person name="Herzberg C."/>
            <person name="Steckel S."/>
            <person name="Feesche J."/>
            <person name="Maurer K.H."/>
            <person name="Ehrenreich P."/>
            <person name="Baeumer S."/>
            <person name="Henne A."/>
            <person name="Liesegang H."/>
            <person name="Merkl R."/>
            <person name="Ehrenreich A."/>
            <person name="Gottschalk G."/>
        </authorList>
    </citation>
    <scope>NUCLEOTIDE SEQUENCE [LARGE SCALE GENOMIC DNA]</scope>
    <source>
        <strain>ATCC 14580 / DSM 13 / JCM 2505 / CCUG 7422 / NBRC 12200 / NCIMB 9375 / NCTC 10341 / NRRL NRS-1264 / Gibson 46</strain>
    </source>
</reference>
<reference key="3">
    <citation type="journal article" date="2004" name="Genome Biol.">
        <title>Complete genome sequence of the industrial bacterium Bacillus licheniformis and comparisons with closely related Bacillus species.</title>
        <authorList>
            <person name="Rey M.W."/>
            <person name="Ramaiya P."/>
            <person name="Nelson B.A."/>
            <person name="Brody-Karpin S.D."/>
            <person name="Zaretsky E.J."/>
            <person name="Tang M."/>
            <person name="Lopez de Leon A."/>
            <person name="Xiang H."/>
            <person name="Gusti V."/>
            <person name="Clausen I.G."/>
            <person name="Olsen P.B."/>
            <person name="Rasmussen M.D."/>
            <person name="Andersen J.T."/>
            <person name="Joergensen P.L."/>
            <person name="Larsen T.S."/>
            <person name="Sorokin A."/>
            <person name="Bolotin A."/>
            <person name="Lapidus A."/>
            <person name="Galleron N."/>
            <person name="Ehrlich S.D."/>
            <person name="Berka R.M."/>
        </authorList>
    </citation>
    <scope>NUCLEOTIDE SEQUENCE [LARGE SCALE GENOMIC DNA]</scope>
    <source>
        <strain>ATCC 14580 / DSM 13 / JCM 2505 / CCUG 7422 / NBRC 12200 / NCIMB 9375 / NCTC 10341 / NRRL NRS-1264 / Gibson 46</strain>
    </source>
</reference>
<protein>
    <recommendedName>
        <fullName>Degradation enzyme regulation protein DegQ</fullName>
    </recommendedName>
    <alternativeName>
        <fullName>Regulatory factor SacQ</fullName>
    </alternativeName>
</protein>
<sequence length="46" mass="5748">MEKQQIEELKQLLWRLENEIRETKDSLRKINKSIDQYDKYTYLKTS</sequence>
<organism>
    <name type="scientific">Bacillus licheniformis (strain ATCC 14580 / DSM 13 / JCM 2505 / CCUG 7422 / NBRC 12200 / NCIMB 9375 / NCTC 10341 / NRRL NRS-1264 / Gibson 46)</name>
    <dbReference type="NCBI Taxonomy" id="279010"/>
    <lineage>
        <taxon>Bacteria</taxon>
        <taxon>Bacillati</taxon>
        <taxon>Bacillota</taxon>
        <taxon>Bacilli</taxon>
        <taxon>Bacillales</taxon>
        <taxon>Bacillaceae</taxon>
        <taxon>Bacillus</taxon>
    </lineage>
</organism>
<keyword id="KW-1185">Reference proteome</keyword>
<accession>P69889</accession>
<accession>P12051</accession>
<accession>P18189</accession>
<accession>Q65FH3</accession>
<feature type="chain" id="PRO_0000079853" description="Degradation enzyme regulation protein DegQ">
    <location>
        <begin position="1"/>
        <end position="46"/>
    </location>
</feature>
<name>DEGQ_BACLD</name>
<proteinExistence type="inferred from homology"/>
<comment type="function">
    <text evidence="1">Stimulates the phosphotransfer from phospho-DegS to DegU. Affects protease and levansucrose production (By similarity).</text>
</comment>
<comment type="similarity">
    <text evidence="2">Belongs to the DegQ family.</text>
</comment>